<organism>
    <name type="scientific">Porphyromonas gingivalis (strain ATCC 33277 / DSM 20709 / CIP 103683 / JCM 12257 / NCTC 11834 / 2561)</name>
    <dbReference type="NCBI Taxonomy" id="431947"/>
    <lineage>
        <taxon>Bacteria</taxon>
        <taxon>Pseudomonadati</taxon>
        <taxon>Bacteroidota</taxon>
        <taxon>Bacteroidia</taxon>
        <taxon>Bacteroidales</taxon>
        <taxon>Porphyromonadaceae</taxon>
        <taxon>Porphyromonas</taxon>
    </lineage>
</organism>
<proteinExistence type="inferred from homology"/>
<evidence type="ECO:0000255" key="1">
    <source>
        <dbReference type="HAMAP-Rule" id="MF_00318"/>
    </source>
</evidence>
<feature type="chain" id="PRO_1000115897" description="Enolase">
    <location>
        <begin position="1"/>
        <end position="425"/>
    </location>
</feature>
<feature type="active site" description="Proton donor" evidence="1">
    <location>
        <position position="204"/>
    </location>
</feature>
<feature type="active site" description="Proton acceptor" evidence="1">
    <location>
        <position position="340"/>
    </location>
</feature>
<feature type="binding site" evidence="1">
    <location>
        <position position="162"/>
    </location>
    <ligand>
        <name>(2R)-2-phosphoglycerate</name>
        <dbReference type="ChEBI" id="CHEBI:58289"/>
    </ligand>
</feature>
<feature type="binding site" evidence="1">
    <location>
        <position position="241"/>
    </location>
    <ligand>
        <name>Mg(2+)</name>
        <dbReference type="ChEBI" id="CHEBI:18420"/>
    </ligand>
</feature>
<feature type="binding site" evidence="1">
    <location>
        <position position="288"/>
    </location>
    <ligand>
        <name>Mg(2+)</name>
        <dbReference type="ChEBI" id="CHEBI:18420"/>
    </ligand>
</feature>
<feature type="binding site" evidence="1">
    <location>
        <position position="315"/>
    </location>
    <ligand>
        <name>Mg(2+)</name>
        <dbReference type="ChEBI" id="CHEBI:18420"/>
    </ligand>
</feature>
<feature type="binding site" evidence="1">
    <location>
        <position position="340"/>
    </location>
    <ligand>
        <name>(2R)-2-phosphoglycerate</name>
        <dbReference type="ChEBI" id="CHEBI:58289"/>
    </ligand>
</feature>
<feature type="binding site" evidence="1">
    <location>
        <position position="369"/>
    </location>
    <ligand>
        <name>(2R)-2-phosphoglycerate</name>
        <dbReference type="ChEBI" id="CHEBI:58289"/>
    </ligand>
</feature>
<feature type="binding site" evidence="1">
    <location>
        <position position="370"/>
    </location>
    <ligand>
        <name>(2R)-2-phosphoglycerate</name>
        <dbReference type="ChEBI" id="CHEBI:58289"/>
    </ligand>
</feature>
<feature type="binding site" evidence="1">
    <location>
        <position position="391"/>
    </location>
    <ligand>
        <name>(2R)-2-phosphoglycerate</name>
        <dbReference type="ChEBI" id="CHEBI:58289"/>
    </ligand>
</feature>
<sequence length="425" mass="45849">MEIVKIIGREILDSRGNPTVEVDVHLACGIIGRAAVPSGASTGENEAIELRDQDKARYCGKGVLKAVKNVNEVIDPALCGMSVLEQTAIDRKLIELDGTKTKSNLGANAMLGVSLAVAKAAAAYLDIPLYRYIGGSNTYVLPVPMMNIINGGSHSDAPIAFQEFMIRPVGACCFREGLRMGAEVFHALKKVLHDRGLSTAVGDEGGFAPALNGTEDAIESILKAVEAAGYVPGKDITIAMDCASSEFFKDGIYDYTKFEGEKGKKRSIDEQVAYLTELVGKYPIDSIEDGMSENDWEGWKKLTVALGDKVQLVGDDLFVTNVEFLRRGIAEKCGNSILIKVNQIGTLTETLNAIEMAHRHGFTSVTSHRSGETEDTTIADIAVATNSGQIKTGSLSRTDRMAKYNQLLRIEEELGPCAVYGYKKV</sequence>
<keyword id="KW-0963">Cytoplasm</keyword>
<keyword id="KW-0324">Glycolysis</keyword>
<keyword id="KW-0456">Lyase</keyword>
<keyword id="KW-0460">Magnesium</keyword>
<keyword id="KW-0479">Metal-binding</keyword>
<keyword id="KW-0964">Secreted</keyword>
<protein>
    <recommendedName>
        <fullName evidence="1">Enolase</fullName>
        <ecNumber evidence="1">4.2.1.11</ecNumber>
    </recommendedName>
    <alternativeName>
        <fullName evidence="1">2-phospho-D-glycerate hydro-lyase</fullName>
    </alternativeName>
    <alternativeName>
        <fullName evidence="1">2-phosphoglycerate dehydratase</fullName>
    </alternativeName>
</protein>
<accession>B2RLL7</accession>
<reference key="1">
    <citation type="journal article" date="2008" name="DNA Res.">
        <title>Determination of the genome sequence of Porphyromonas gingivalis strain ATCC 33277 and genomic comparison with strain W83 revealed extensive genome rearrangements in P. gingivalis.</title>
        <authorList>
            <person name="Naito M."/>
            <person name="Hirakawa H."/>
            <person name="Yamashita A."/>
            <person name="Ohara N."/>
            <person name="Shoji M."/>
            <person name="Yukitake H."/>
            <person name="Nakayama K."/>
            <person name="Toh H."/>
            <person name="Yoshimura F."/>
            <person name="Kuhara S."/>
            <person name="Hattori M."/>
            <person name="Hayashi T."/>
            <person name="Nakayama K."/>
        </authorList>
    </citation>
    <scope>NUCLEOTIDE SEQUENCE [LARGE SCALE GENOMIC DNA]</scope>
    <source>
        <strain>ATCC 33277 / DSM 20709 / CIP 103683 / JCM 12257 / NCTC 11834 / 2561</strain>
    </source>
</reference>
<gene>
    <name evidence="1" type="primary">eno</name>
    <name type="ordered locus">PGN_1743</name>
</gene>
<comment type="function">
    <text evidence="1">Catalyzes the reversible conversion of 2-phosphoglycerate (2-PG) into phosphoenolpyruvate (PEP). It is essential for the degradation of carbohydrates via glycolysis.</text>
</comment>
<comment type="catalytic activity">
    <reaction evidence="1">
        <text>(2R)-2-phosphoglycerate = phosphoenolpyruvate + H2O</text>
        <dbReference type="Rhea" id="RHEA:10164"/>
        <dbReference type="ChEBI" id="CHEBI:15377"/>
        <dbReference type="ChEBI" id="CHEBI:58289"/>
        <dbReference type="ChEBI" id="CHEBI:58702"/>
        <dbReference type="EC" id="4.2.1.11"/>
    </reaction>
</comment>
<comment type="cofactor">
    <cofactor evidence="1">
        <name>Mg(2+)</name>
        <dbReference type="ChEBI" id="CHEBI:18420"/>
    </cofactor>
    <text evidence="1">Binds a second Mg(2+) ion via substrate during catalysis.</text>
</comment>
<comment type="pathway">
    <text evidence="1">Carbohydrate degradation; glycolysis; pyruvate from D-glyceraldehyde 3-phosphate: step 4/5.</text>
</comment>
<comment type="subcellular location">
    <subcellularLocation>
        <location evidence="1">Cytoplasm</location>
    </subcellularLocation>
    <subcellularLocation>
        <location evidence="1">Secreted</location>
    </subcellularLocation>
    <subcellularLocation>
        <location evidence="1">Cell surface</location>
    </subcellularLocation>
    <text evidence="1">Fractions of enolase are present in both the cytoplasm and on the cell surface.</text>
</comment>
<comment type="similarity">
    <text evidence="1">Belongs to the enolase family.</text>
</comment>
<dbReference type="EC" id="4.2.1.11" evidence="1"/>
<dbReference type="EMBL" id="AP009380">
    <property type="protein sequence ID" value="BAG34262.1"/>
    <property type="molecule type" value="Genomic_DNA"/>
</dbReference>
<dbReference type="RefSeq" id="WP_012458500.1">
    <property type="nucleotide sequence ID" value="NC_010729.1"/>
</dbReference>
<dbReference type="SMR" id="B2RLL7"/>
<dbReference type="GeneID" id="29256903"/>
<dbReference type="KEGG" id="pgn:PGN_1743"/>
<dbReference type="eggNOG" id="COG0148">
    <property type="taxonomic scope" value="Bacteria"/>
</dbReference>
<dbReference type="HOGENOM" id="CLU_031223_2_1_10"/>
<dbReference type="OrthoDB" id="9804716at2"/>
<dbReference type="BioCyc" id="PGIN431947:G1G2V-1954-MONOMER"/>
<dbReference type="UniPathway" id="UPA00109">
    <property type="reaction ID" value="UER00187"/>
</dbReference>
<dbReference type="Proteomes" id="UP000008842">
    <property type="component" value="Chromosome"/>
</dbReference>
<dbReference type="GO" id="GO:0009986">
    <property type="term" value="C:cell surface"/>
    <property type="evidence" value="ECO:0007669"/>
    <property type="project" value="UniProtKB-SubCell"/>
</dbReference>
<dbReference type="GO" id="GO:0005576">
    <property type="term" value="C:extracellular region"/>
    <property type="evidence" value="ECO:0007669"/>
    <property type="project" value="UniProtKB-SubCell"/>
</dbReference>
<dbReference type="GO" id="GO:0000015">
    <property type="term" value="C:phosphopyruvate hydratase complex"/>
    <property type="evidence" value="ECO:0007669"/>
    <property type="project" value="InterPro"/>
</dbReference>
<dbReference type="GO" id="GO:0000287">
    <property type="term" value="F:magnesium ion binding"/>
    <property type="evidence" value="ECO:0007669"/>
    <property type="project" value="UniProtKB-UniRule"/>
</dbReference>
<dbReference type="GO" id="GO:0004634">
    <property type="term" value="F:phosphopyruvate hydratase activity"/>
    <property type="evidence" value="ECO:0007669"/>
    <property type="project" value="UniProtKB-UniRule"/>
</dbReference>
<dbReference type="GO" id="GO:0006096">
    <property type="term" value="P:glycolytic process"/>
    <property type="evidence" value="ECO:0007669"/>
    <property type="project" value="UniProtKB-UniRule"/>
</dbReference>
<dbReference type="CDD" id="cd03313">
    <property type="entry name" value="enolase"/>
    <property type="match status" value="1"/>
</dbReference>
<dbReference type="FunFam" id="3.20.20.120:FF:000001">
    <property type="entry name" value="Enolase"/>
    <property type="match status" value="1"/>
</dbReference>
<dbReference type="FunFam" id="3.30.390.10:FF:000001">
    <property type="entry name" value="Enolase"/>
    <property type="match status" value="1"/>
</dbReference>
<dbReference type="Gene3D" id="3.20.20.120">
    <property type="entry name" value="Enolase-like C-terminal domain"/>
    <property type="match status" value="1"/>
</dbReference>
<dbReference type="Gene3D" id="3.30.390.10">
    <property type="entry name" value="Enolase-like, N-terminal domain"/>
    <property type="match status" value="1"/>
</dbReference>
<dbReference type="HAMAP" id="MF_00318">
    <property type="entry name" value="Enolase"/>
    <property type="match status" value="1"/>
</dbReference>
<dbReference type="InterPro" id="IPR000941">
    <property type="entry name" value="Enolase"/>
</dbReference>
<dbReference type="InterPro" id="IPR036849">
    <property type="entry name" value="Enolase-like_C_sf"/>
</dbReference>
<dbReference type="InterPro" id="IPR029017">
    <property type="entry name" value="Enolase-like_N"/>
</dbReference>
<dbReference type="InterPro" id="IPR020810">
    <property type="entry name" value="Enolase_C"/>
</dbReference>
<dbReference type="InterPro" id="IPR020809">
    <property type="entry name" value="Enolase_CS"/>
</dbReference>
<dbReference type="InterPro" id="IPR020811">
    <property type="entry name" value="Enolase_N"/>
</dbReference>
<dbReference type="NCBIfam" id="TIGR01060">
    <property type="entry name" value="eno"/>
    <property type="match status" value="1"/>
</dbReference>
<dbReference type="PANTHER" id="PTHR11902">
    <property type="entry name" value="ENOLASE"/>
    <property type="match status" value="1"/>
</dbReference>
<dbReference type="PANTHER" id="PTHR11902:SF1">
    <property type="entry name" value="ENOLASE"/>
    <property type="match status" value="1"/>
</dbReference>
<dbReference type="Pfam" id="PF00113">
    <property type="entry name" value="Enolase_C"/>
    <property type="match status" value="1"/>
</dbReference>
<dbReference type="Pfam" id="PF03952">
    <property type="entry name" value="Enolase_N"/>
    <property type="match status" value="1"/>
</dbReference>
<dbReference type="PIRSF" id="PIRSF001400">
    <property type="entry name" value="Enolase"/>
    <property type="match status" value="1"/>
</dbReference>
<dbReference type="PRINTS" id="PR00148">
    <property type="entry name" value="ENOLASE"/>
</dbReference>
<dbReference type="SFLD" id="SFLDS00001">
    <property type="entry name" value="Enolase"/>
    <property type="match status" value="1"/>
</dbReference>
<dbReference type="SFLD" id="SFLDF00002">
    <property type="entry name" value="enolase"/>
    <property type="match status" value="1"/>
</dbReference>
<dbReference type="SMART" id="SM01192">
    <property type="entry name" value="Enolase_C"/>
    <property type="match status" value="1"/>
</dbReference>
<dbReference type="SMART" id="SM01193">
    <property type="entry name" value="Enolase_N"/>
    <property type="match status" value="1"/>
</dbReference>
<dbReference type="SUPFAM" id="SSF51604">
    <property type="entry name" value="Enolase C-terminal domain-like"/>
    <property type="match status" value="1"/>
</dbReference>
<dbReference type="SUPFAM" id="SSF54826">
    <property type="entry name" value="Enolase N-terminal domain-like"/>
    <property type="match status" value="1"/>
</dbReference>
<dbReference type="PROSITE" id="PS00164">
    <property type="entry name" value="ENOLASE"/>
    <property type="match status" value="1"/>
</dbReference>
<name>ENO_PORG3</name>